<reference key="1">
    <citation type="journal article" date="2004" name="Arch. Virol.">
        <title>Analysis of an isolate of Mungbean yellow mosaic virus (MYMV) with a highly variable DNA B component.</title>
        <authorList>
            <person name="Karthikeyan A.S."/>
            <person name="Vanitharani R."/>
            <person name="Balaji V."/>
            <person name="Anuradha S."/>
            <person name="Thillaichidambaram P."/>
            <person name="Shivaprasad P.V."/>
            <person name="Parameswari C."/>
            <person name="Balamani V."/>
            <person name="Saminathan M."/>
            <person name="Veluthambi K."/>
        </authorList>
    </citation>
    <scope>NUCLEOTIDE SEQUENCE [GENOMIC DNA]</scope>
</reference>
<reference key="2">
    <citation type="journal article" date="2006" name="Nucleic Acids Res.">
        <title>The oligomeric Rep protein of Mungbean yellow mosaic India virus (MYMIV) is a likely replicative helicase.</title>
        <authorList>
            <person name="Choudhury N.R."/>
            <person name="Malik P.S."/>
            <person name="Singh D.K."/>
            <person name="Islam M.N."/>
            <person name="Kaliappan K."/>
            <person name="Mukherjee S.K."/>
        </authorList>
    </citation>
    <scope>CHARACTERIZATION OF THE HELICASE ACTIVITY</scope>
</reference>
<reference key="3">
    <citation type="journal article" date="2012" name="FASEB J.">
        <title>A novel role for RAD54: this host protein modulates geminiviral DNA replication.</title>
        <authorList>
            <person name="Kaliappan K."/>
            <person name="Choudhury N.R."/>
            <person name="Suyal G."/>
            <person name="Mukherjee S.K."/>
        </authorList>
    </citation>
    <scope>FUNCTION</scope>
    <scope>INTERACTION WITH THE HOST RAD54 PROTEIN</scope>
</reference>
<organism>
    <name type="scientific">Mungbean yellow mosaic virus (strain Vigna)</name>
    <name type="common">MYMV</name>
    <dbReference type="NCBI Taxonomy" id="223295"/>
    <lineage>
        <taxon>Viruses</taxon>
        <taxon>Monodnaviria</taxon>
        <taxon>Shotokuvirae</taxon>
        <taxon>Cressdnaviricota</taxon>
        <taxon>Repensiviricetes</taxon>
        <taxon>Geplafuvirales</taxon>
        <taxon>Geminiviridae</taxon>
        <taxon>Begomovirus</taxon>
        <taxon>Mungbean yellow mosaic virus</taxon>
    </lineage>
</organism>
<name>REP_MYMVV</name>
<organismHost>
    <name type="scientific">Glycine max</name>
    <name type="common">Soybean</name>
    <name type="synonym">Glycine hispida</name>
    <dbReference type="NCBI Taxonomy" id="3847"/>
</organismHost>
<organismHost>
    <name type="scientific">Vigna mungo</name>
    <name type="common">Black gram</name>
    <name type="synonym">Phaseolus mungo</name>
    <dbReference type="NCBI Taxonomy" id="3915"/>
</organismHost>
<organismHost>
    <name type="scientific">Vigna radiata</name>
    <name type="common">Mung bean</name>
    <dbReference type="NCBI Taxonomy" id="157791"/>
</organismHost>
<organismHost>
    <name type="scientific">Vigna radiata var. radiata</name>
    <name type="common">Mung bean</name>
    <name type="synonym">Phaseolus aureus</name>
    <dbReference type="NCBI Taxonomy" id="3916"/>
</organismHost>
<organismHost>
    <name type="scientific">Vigna unguiculata</name>
    <name type="common">Cowpea</name>
    <dbReference type="NCBI Taxonomy" id="3917"/>
</organismHost>
<protein>
    <recommendedName>
        <fullName>Replication-associated protein</fullName>
        <shortName>Rep</shortName>
        <ecNumber>2.7.7.-</ecNumber>
        <ecNumber>3.1.21.-</ecNumber>
    </recommendedName>
    <alternativeName>
        <fullName>Protein AC1</fullName>
    </alternativeName>
    <alternativeName>
        <fullName>Protein AL1</fullName>
    </alternativeName>
</protein>
<dbReference type="EC" id="2.7.7.-"/>
<dbReference type="EC" id="3.1.21.-"/>
<dbReference type="EMBL" id="AJ132575">
    <property type="protein sequence ID" value="CAA10707.1"/>
    <property type="molecule type" value="Genomic_DNA"/>
</dbReference>
<dbReference type="SMR" id="Q9YPS2"/>
<dbReference type="Proteomes" id="UP000007784">
    <property type="component" value="Genome"/>
</dbReference>
<dbReference type="GO" id="GO:0042025">
    <property type="term" value="C:host cell nucleus"/>
    <property type="evidence" value="ECO:0007669"/>
    <property type="project" value="UniProtKB-SubCell"/>
</dbReference>
<dbReference type="GO" id="GO:0005524">
    <property type="term" value="F:ATP binding"/>
    <property type="evidence" value="ECO:0007669"/>
    <property type="project" value="UniProtKB-KW"/>
</dbReference>
<dbReference type="GO" id="GO:0003677">
    <property type="term" value="F:DNA binding"/>
    <property type="evidence" value="ECO:0007669"/>
    <property type="project" value="UniProtKB-KW"/>
</dbReference>
<dbReference type="GO" id="GO:0016888">
    <property type="term" value="F:endodeoxyribonuclease activity, producing 5'-phosphomonoesters"/>
    <property type="evidence" value="ECO:0007669"/>
    <property type="project" value="InterPro"/>
</dbReference>
<dbReference type="GO" id="GO:0004386">
    <property type="term" value="F:helicase activity"/>
    <property type="evidence" value="ECO:0007669"/>
    <property type="project" value="UniProtKB-KW"/>
</dbReference>
<dbReference type="GO" id="GO:0046872">
    <property type="term" value="F:metal ion binding"/>
    <property type="evidence" value="ECO:0007669"/>
    <property type="project" value="UniProtKB-KW"/>
</dbReference>
<dbReference type="GO" id="GO:0016779">
    <property type="term" value="F:nucleotidyltransferase activity"/>
    <property type="evidence" value="ECO:0007669"/>
    <property type="project" value="UniProtKB-KW"/>
</dbReference>
<dbReference type="GO" id="GO:0005198">
    <property type="term" value="F:structural molecule activity"/>
    <property type="evidence" value="ECO:0007669"/>
    <property type="project" value="InterPro"/>
</dbReference>
<dbReference type="GO" id="GO:0051701">
    <property type="term" value="P:biological process involved in interaction with host"/>
    <property type="evidence" value="ECO:0000353"/>
    <property type="project" value="UniProtKB"/>
</dbReference>
<dbReference type="GO" id="GO:0006260">
    <property type="term" value="P:DNA replication"/>
    <property type="evidence" value="ECO:0007669"/>
    <property type="project" value="UniProtKB-KW"/>
</dbReference>
<dbReference type="FunFam" id="3.40.1310.20:FF:000001">
    <property type="entry name" value="Replication-associated protein"/>
    <property type="match status" value="1"/>
</dbReference>
<dbReference type="Gene3D" id="3.40.1310.20">
    <property type="match status" value="1"/>
</dbReference>
<dbReference type="InterPro" id="IPR049912">
    <property type="entry name" value="CRESS_DNA_REP"/>
</dbReference>
<dbReference type="InterPro" id="IPR001301">
    <property type="entry name" value="Gemini_AL1_CLV"/>
</dbReference>
<dbReference type="InterPro" id="IPR001191">
    <property type="entry name" value="Gemini_AL1_REP"/>
</dbReference>
<dbReference type="InterPro" id="IPR022692">
    <property type="entry name" value="Gemini_AL1_REP_central"/>
</dbReference>
<dbReference type="Pfam" id="PF00799">
    <property type="entry name" value="Gemini_AL1"/>
    <property type="match status" value="1"/>
</dbReference>
<dbReference type="Pfam" id="PF08283">
    <property type="entry name" value="Gemini_AL1_M"/>
    <property type="match status" value="1"/>
</dbReference>
<dbReference type="PRINTS" id="PR00227">
    <property type="entry name" value="GEMCOATAL1"/>
</dbReference>
<dbReference type="PRINTS" id="PR00228">
    <property type="entry name" value="GEMCOATCLVL1"/>
</dbReference>
<dbReference type="SUPFAM" id="SSF55464">
    <property type="entry name" value="Origin of replication-binding domain, RBD-like"/>
    <property type="match status" value="1"/>
</dbReference>
<dbReference type="PROSITE" id="PS52020">
    <property type="entry name" value="CRESS_DNA_REP"/>
    <property type="match status" value="1"/>
</dbReference>
<accession>Q9YPS2</accession>
<comment type="function">
    <text evidence="4">Essential for the replication of viral ssDNA. The closed circular ssDNA genome is first converted to a superhelical dsDNA. Rep binds a specific region at the genome origin of replication. It introduces an endonucleolytic nick within the conserved sequence 5'-TAATATTAC-3' in the intergenic region of the genome present in all geminiviruses, thereby initiating the rolling circle replication (RCR). Following cleavage, binds covalently to the 5'-phosphate of DNA as a tyrosyl ester. The cleavage gives rise to a free 3'-OH that serves as a primer for the cellular DNA polymerase. The polymerase synthesizes the (+) strand DNA by rolling circle mechanism. After one round of replication, a Rep-catalyzed nucleotidyl transfer reaction releases a circular single-stranded virus genome, thereby terminating the replication. Displays origin-specific DNA cleavage, nucleotidyl transferase, ATPase and helicase activities.</text>
</comment>
<comment type="cofactor">
    <cofactor evidence="3">
        <name>Mg(2+)</name>
        <dbReference type="ChEBI" id="CHEBI:18420"/>
    </cofactor>
    <cofactor evidence="3">
        <name>Mn(2+)</name>
        <dbReference type="ChEBI" id="CHEBI:29035"/>
    </cofactor>
    <text evidence="3">Divalent metal cations, possibly Mg(2+) or Mn(2+).</text>
</comment>
<comment type="subunit">
    <text evidence="1 4">Homooligomer. Interacts with the replication enhancer protein (REn). Interacts with host retinoblastoma-related protein 1 (RBR1), and may thereby induce the transcription of host replicative enzymes even if the cell is not dividing anymore. Interacts with host PCNA. Interacts with host SCE1 protein (By similarity). Binds to host RAD54 protein to ensure geminiviral replication.</text>
</comment>
<comment type="subcellular location">
    <subcellularLocation>
        <location evidence="1">Host nucleus</location>
    </subcellularLocation>
</comment>
<comment type="domain">
    <text evidence="1">There are 3 rolling circle replication (RCR) motifs. RCR-2 is probably involved in metal coordination. RCR-3 is required for phosphodiester bond cleavage for initiation of RCR (By similarity).</text>
</comment>
<comment type="similarity">
    <text evidence="5">Belongs to the geminiviridae Rep protein family.</text>
</comment>
<feature type="chain" id="PRO_0000320112" description="Replication-associated protein">
    <location>
        <begin position="1"/>
        <end position="361"/>
    </location>
</feature>
<feature type="domain" description="CRESS-DNA virus Rep endonuclease" evidence="3">
    <location>
        <begin position="8"/>
        <end position="116"/>
    </location>
</feature>
<feature type="region of interest" description="Binding to RBR1" evidence="1">
    <location>
        <begin position="143"/>
        <end position="153"/>
    </location>
</feature>
<feature type="region of interest" description="Oligomerization" evidence="1">
    <location>
        <begin position="156"/>
        <end position="176"/>
    </location>
</feature>
<feature type="short sequence motif" description="RCR-1" evidence="3">
    <location>
        <begin position="15"/>
        <end position="18"/>
    </location>
</feature>
<feature type="short sequence motif" description="RCR-2" evidence="3">
    <location>
        <begin position="57"/>
        <end position="59"/>
    </location>
</feature>
<feature type="short sequence motif" description="RCR-3" evidence="3">
    <location>
        <begin position="103"/>
        <end position="106"/>
    </location>
</feature>
<feature type="active site" description="For DNA cleavage activity" evidence="3">
    <location>
        <position position="103"/>
    </location>
</feature>
<feature type="binding site" evidence="3">
    <location>
        <position position="49"/>
    </location>
    <ligand>
        <name>a divalent metal cation</name>
        <dbReference type="ChEBI" id="CHEBI:60240"/>
    </ligand>
</feature>
<feature type="binding site" evidence="3">
    <location>
        <position position="57"/>
    </location>
    <ligand>
        <name>a divalent metal cation</name>
        <dbReference type="ChEBI" id="CHEBI:60240"/>
    </ligand>
</feature>
<feature type="binding site" evidence="3">
    <location>
        <position position="59"/>
    </location>
    <ligand>
        <name>a divalent metal cation</name>
        <dbReference type="ChEBI" id="CHEBI:60240"/>
    </ligand>
</feature>
<feature type="binding site" evidence="3">
    <location>
        <position position="107"/>
    </location>
    <ligand>
        <name>a divalent metal cation</name>
        <dbReference type="ChEBI" id="CHEBI:60240"/>
    </ligand>
</feature>
<feature type="binding site" evidence="2">
    <location>
        <begin position="220"/>
        <end position="227"/>
    </location>
    <ligand>
        <name>ATP</name>
        <dbReference type="ChEBI" id="CHEBI:30616"/>
    </ligand>
</feature>
<proteinExistence type="evidence at protein level"/>
<gene>
    <name type="ORF">AC1</name>
    <name type="ORF">AL1</name>
</gene>
<keyword id="KW-0067">ATP-binding</keyword>
<keyword id="KW-0190">Covalent protein-DNA linkage</keyword>
<keyword id="KW-0235">DNA replication</keyword>
<keyword id="KW-0238">DNA-binding</keyword>
<keyword id="KW-0255">Endonuclease</keyword>
<keyword id="KW-0347">Helicase</keyword>
<keyword id="KW-1048">Host nucleus</keyword>
<keyword id="KW-0945">Host-virus interaction</keyword>
<keyword id="KW-0378">Hydrolase</keyword>
<keyword id="KW-0479">Metal-binding</keyword>
<keyword id="KW-0511">Multifunctional enzyme</keyword>
<keyword id="KW-0540">Nuclease</keyword>
<keyword id="KW-0547">Nucleotide-binding</keyword>
<keyword id="KW-0548">Nucleotidyltransferase</keyword>
<keyword id="KW-1185">Reference proteome</keyword>
<keyword id="KW-0808">Transferase</keyword>
<sequence length="361" mass="40677">MPRLGRFAINAKNYFLTYPRCPLTKEDVLEQLLALSTPVNKKFIRVCRELHEDGEPHLHVLLQFEGKLQTKNERFFDLVSPTRSTHYHPNIQAAKSASDVKSYMDKDGDVLDHGSFQVDGRSARGGKQSANDAYAEALNSGSKLQALNILREKAPKDYILQFHNLNCNLSRIFADDVPPYVSPYSLSAFDKVPSYISSWASENVRDSCAPERPISIVIEGDSRTGKTMWARALGPHNYLCGHLDLNSKIYSNDAWYNVIDDVDPHYLKHFKEFMGAQRDWQSNVKYGKPTHIKGGIPTIFLCNPGPKSSYKEYLDEPDNTALKLWASKNAEFYTLKEPLFSSVDQGATQGCQEASNSTLSN</sequence>
<evidence type="ECO:0000250" key="1"/>
<evidence type="ECO:0000255" key="2"/>
<evidence type="ECO:0000255" key="3">
    <source>
        <dbReference type="PROSITE-ProRule" id="PRU01364"/>
    </source>
</evidence>
<evidence type="ECO:0000269" key="4">
    <source>
    </source>
</evidence>
<evidence type="ECO:0000305" key="5"/>